<gene>
    <name type="primary">CIRBP-AS1</name>
    <name type="synonym">C19orf23</name>
</gene>
<name>CSAS1_HUMAN</name>
<protein>
    <recommendedName>
        <fullName>Putative uncharacterized protein CIRBP-AS1</fullName>
    </recommendedName>
    <alternativeName>
        <fullName>CIRBP antisense RNA 1</fullName>
    </alternativeName>
    <alternativeName>
        <fullName>CIRBP antisense gene protein 1</fullName>
    </alternativeName>
</protein>
<keyword id="KW-1185">Reference proteome</keyword>
<dbReference type="EMBL" id="AC004221">
    <property type="status" value="NOT_ANNOTATED_CDS"/>
    <property type="molecule type" value="Genomic_DNA"/>
</dbReference>
<dbReference type="EMBL" id="AC004258">
    <property type="status" value="NOT_ANNOTATED_CDS"/>
    <property type="molecule type" value="Genomic_DNA"/>
</dbReference>
<dbReference type="EMBL" id="BC026041">
    <property type="status" value="NOT_ANNOTATED_CDS"/>
    <property type="molecule type" value="mRNA"/>
</dbReference>
<dbReference type="iPTMnet" id="Q8TBR5"/>
<dbReference type="PhosphoSitePlus" id="Q8TBR5"/>
<dbReference type="BioMuta" id="HGNC:28588"/>
<dbReference type="DMDM" id="71153225"/>
<dbReference type="MassIVE" id="Q8TBR5"/>
<dbReference type="AGR" id="HGNC:28588"/>
<dbReference type="GeneCards" id="CIRBP-AS1"/>
<dbReference type="HGNC" id="HGNC:28588">
    <property type="gene designation" value="CIRBP-AS1"/>
</dbReference>
<dbReference type="neXtProt" id="NX_Q8TBR5"/>
<dbReference type="InParanoid" id="Q8TBR5"/>
<dbReference type="PAN-GO" id="Q8TBR5">
    <property type="GO annotations" value="0 GO annotations based on evolutionary models"/>
</dbReference>
<dbReference type="PathwayCommons" id="Q8TBR5"/>
<dbReference type="Pharos" id="Q8TBR5">
    <property type="development level" value="Tdark"/>
</dbReference>
<dbReference type="Proteomes" id="UP000005640">
    <property type="component" value="Unplaced"/>
</dbReference>
<dbReference type="RNAct" id="Q8TBR5">
    <property type="molecule type" value="protein"/>
</dbReference>
<proteinExistence type="uncertain"/>
<feature type="chain" id="PRO_0000079384" description="Putative uncharacterized protein CIRBP-AS1">
    <location>
        <begin position="1"/>
        <end position="109"/>
    </location>
</feature>
<feature type="region of interest" description="Disordered" evidence="1">
    <location>
        <begin position="77"/>
        <end position="98"/>
    </location>
</feature>
<comment type="caution">
    <text evidence="2">Product of a dubious gene prediction.</text>
</comment>
<accession>Q8TBR5</accession>
<organism>
    <name type="scientific">Homo sapiens</name>
    <name type="common">Human</name>
    <dbReference type="NCBI Taxonomy" id="9606"/>
    <lineage>
        <taxon>Eukaryota</taxon>
        <taxon>Metazoa</taxon>
        <taxon>Chordata</taxon>
        <taxon>Craniata</taxon>
        <taxon>Vertebrata</taxon>
        <taxon>Euteleostomi</taxon>
        <taxon>Mammalia</taxon>
        <taxon>Eutheria</taxon>
        <taxon>Euarchontoglires</taxon>
        <taxon>Primates</taxon>
        <taxon>Haplorrhini</taxon>
        <taxon>Catarrhini</taxon>
        <taxon>Hominidae</taxon>
        <taxon>Homo</taxon>
    </lineage>
</organism>
<sequence length="109" mass="12399">MAPEVIRQDFQAGEVAFRRTGYLRGRSVLTQTKHSLAGNGRHPVALRTRLGSLALGAVPTWTKLWAQSTTWQTRNHTRTGHAYPRFTRPSFPSCNRNGKRRKLRLGLPY</sequence>
<reference key="1">
    <citation type="journal article" date="2004" name="Nature">
        <title>The DNA sequence and biology of human chromosome 19.</title>
        <authorList>
            <person name="Grimwood J."/>
            <person name="Gordon L.A."/>
            <person name="Olsen A.S."/>
            <person name="Terry A."/>
            <person name="Schmutz J."/>
            <person name="Lamerdin J.E."/>
            <person name="Hellsten U."/>
            <person name="Goodstein D."/>
            <person name="Couronne O."/>
            <person name="Tran-Gyamfi M."/>
            <person name="Aerts A."/>
            <person name="Altherr M."/>
            <person name="Ashworth L."/>
            <person name="Bajorek E."/>
            <person name="Black S."/>
            <person name="Branscomb E."/>
            <person name="Caenepeel S."/>
            <person name="Carrano A.V."/>
            <person name="Caoile C."/>
            <person name="Chan Y.M."/>
            <person name="Christensen M."/>
            <person name="Cleland C.A."/>
            <person name="Copeland A."/>
            <person name="Dalin E."/>
            <person name="Dehal P."/>
            <person name="Denys M."/>
            <person name="Detter J.C."/>
            <person name="Escobar J."/>
            <person name="Flowers D."/>
            <person name="Fotopulos D."/>
            <person name="Garcia C."/>
            <person name="Georgescu A.M."/>
            <person name="Glavina T."/>
            <person name="Gomez M."/>
            <person name="Gonzales E."/>
            <person name="Groza M."/>
            <person name="Hammon N."/>
            <person name="Hawkins T."/>
            <person name="Haydu L."/>
            <person name="Ho I."/>
            <person name="Huang W."/>
            <person name="Israni S."/>
            <person name="Jett J."/>
            <person name="Kadner K."/>
            <person name="Kimball H."/>
            <person name="Kobayashi A."/>
            <person name="Larionov V."/>
            <person name="Leem S.-H."/>
            <person name="Lopez F."/>
            <person name="Lou Y."/>
            <person name="Lowry S."/>
            <person name="Malfatti S."/>
            <person name="Martinez D."/>
            <person name="McCready P.M."/>
            <person name="Medina C."/>
            <person name="Morgan J."/>
            <person name="Nelson K."/>
            <person name="Nolan M."/>
            <person name="Ovcharenko I."/>
            <person name="Pitluck S."/>
            <person name="Pollard M."/>
            <person name="Popkie A.P."/>
            <person name="Predki P."/>
            <person name="Quan G."/>
            <person name="Ramirez L."/>
            <person name="Rash S."/>
            <person name="Retterer J."/>
            <person name="Rodriguez A."/>
            <person name="Rogers S."/>
            <person name="Salamov A."/>
            <person name="Salazar A."/>
            <person name="She X."/>
            <person name="Smith D."/>
            <person name="Slezak T."/>
            <person name="Solovyev V."/>
            <person name="Thayer N."/>
            <person name="Tice H."/>
            <person name="Tsai M."/>
            <person name="Ustaszewska A."/>
            <person name="Vo N."/>
            <person name="Wagner M."/>
            <person name="Wheeler J."/>
            <person name="Wu K."/>
            <person name="Xie G."/>
            <person name="Yang J."/>
            <person name="Dubchak I."/>
            <person name="Furey T.S."/>
            <person name="DeJong P."/>
            <person name="Dickson M."/>
            <person name="Gordon D."/>
            <person name="Eichler E.E."/>
            <person name="Pennacchio L.A."/>
            <person name="Richardson P."/>
            <person name="Stubbs L."/>
            <person name="Rokhsar D.S."/>
            <person name="Myers R.M."/>
            <person name="Rubin E.M."/>
            <person name="Lucas S.M."/>
        </authorList>
    </citation>
    <scope>NUCLEOTIDE SEQUENCE [LARGE SCALE GENOMIC DNA]</scope>
</reference>
<reference key="2">
    <citation type="journal article" date="2004" name="Genome Res.">
        <title>The status, quality, and expansion of the NIH full-length cDNA project: the Mammalian Gene Collection (MGC).</title>
        <authorList>
            <consortium name="The MGC Project Team"/>
        </authorList>
    </citation>
    <scope>NUCLEOTIDE SEQUENCE [LARGE SCALE MRNA]</scope>
    <source>
        <tissue>Uterus</tissue>
    </source>
</reference>
<evidence type="ECO:0000256" key="1">
    <source>
        <dbReference type="SAM" id="MobiDB-lite"/>
    </source>
</evidence>
<evidence type="ECO:0000305" key="2"/>